<protein>
    <recommendedName>
        <fullName>ADP,ATP carrier protein 1, mitochondrial</fullName>
    </recommendedName>
    <alternativeName>
        <fullName>ADP/ATP translocase 1</fullName>
    </alternativeName>
    <alternativeName>
        <fullName>Adenine nucleotide translocator 1</fullName>
        <shortName>ANT 1</shortName>
    </alternativeName>
</protein>
<dbReference type="EMBL" id="AC012562">
    <property type="protein sequence ID" value="AAG51358.1"/>
    <property type="molecule type" value="Genomic_DNA"/>
</dbReference>
<dbReference type="EMBL" id="CP002686">
    <property type="protein sequence ID" value="AEE74648.1"/>
    <property type="molecule type" value="Genomic_DNA"/>
</dbReference>
<dbReference type="EMBL" id="CP002686">
    <property type="protein sequence ID" value="AEE74649.1"/>
    <property type="molecule type" value="Genomic_DNA"/>
</dbReference>
<dbReference type="EMBL" id="AY034933">
    <property type="protein sequence ID" value="AAK59440.1"/>
    <property type="molecule type" value="mRNA"/>
</dbReference>
<dbReference type="EMBL" id="AY042814">
    <property type="protein sequence ID" value="AAK68754.1"/>
    <property type="molecule type" value="mRNA"/>
</dbReference>
<dbReference type="EMBL" id="AY054248">
    <property type="protein sequence ID" value="AAL06907.1"/>
    <property type="molecule type" value="mRNA"/>
</dbReference>
<dbReference type="EMBL" id="AY074529">
    <property type="protein sequence ID" value="AAL69497.1"/>
    <property type="molecule type" value="mRNA"/>
</dbReference>
<dbReference type="EMBL" id="BT000381">
    <property type="protein sequence ID" value="AAN15700.1"/>
    <property type="molecule type" value="mRNA"/>
</dbReference>
<dbReference type="EMBL" id="BT002387">
    <property type="protein sequence ID" value="AAO00747.1"/>
    <property type="molecule type" value="mRNA"/>
</dbReference>
<dbReference type="EMBL" id="X65549">
    <property type="protein sequence ID" value="CAA46518.1"/>
    <property type="molecule type" value="mRNA"/>
</dbReference>
<dbReference type="EMBL" id="Z26399">
    <property type="protein sequence ID" value="CAA81237.1"/>
    <property type="molecule type" value="mRNA"/>
</dbReference>
<dbReference type="PIR" id="S21313">
    <property type="entry name" value="S21313"/>
</dbReference>
<dbReference type="RefSeq" id="NP_187470.1">
    <property type="nucleotide sequence ID" value="NM_111692.3"/>
</dbReference>
<dbReference type="RefSeq" id="NP_850541.1">
    <property type="nucleotide sequence ID" value="NM_180210.2"/>
</dbReference>
<dbReference type="SMR" id="P31167"/>
<dbReference type="BioGRID" id="5340">
    <property type="interactions" value="48"/>
</dbReference>
<dbReference type="FunCoup" id="P31167">
    <property type="interactions" value="2875"/>
</dbReference>
<dbReference type="IntAct" id="P31167">
    <property type="interactions" value="7"/>
</dbReference>
<dbReference type="MINT" id="P31167"/>
<dbReference type="STRING" id="3702.P31167"/>
<dbReference type="TCDB" id="2.A.29.1.5">
    <property type="family name" value="the mitochondrial carrier (mc) family"/>
</dbReference>
<dbReference type="iPTMnet" id="P31167"/>
<dbReference type="PaxDb" id="3702-AT3G08580.2"/>
<dbReference type="ProteomicsDB" id="244762"/>
<dbReference type="EnsemblPlants" id="AT3G08580.1">
    <property type="protein sequence ID" value="AT3G08580.1"/>
    <property type="gene ID" value="AT3G08580"/>
</dbReference>
<dbReference type="EnsemblPlants" id="AT3G08580.2">
    <property type="protein sequence ID" value="AT3G08580.2"/>
    <property type="gene ID" value="AT3G08580"/>
</dbReference>
<dbReference type="GeneID" id="820005"/>
<dbReference type="Gramene" id="AT3G08580.1">
    <property type="protein sequence ID" value="AT3G08580.1"/>
    <property type="gene ID" value="AT3G08580"/>
</dbReference>
<dbReference type="Gramene" id="AT3G08580.2">
    <property type="protein sequence ID" value="AT3G08580.2"/>
    <property type="gene ID" value="AT3G08580"/>
</dbReference>
<dbReference type="KEGG" id="ath:AT3G08580"/>
<dbReference type="Araport" id="AT3G08580"/>
<dbReference type="TAIR" id="AT3G08580">
    <property type="gene designation" value="AAC1"/>
</dbReference>
<dbReference type="eggNOG" id="KOG0749">
    <property type="taxonomic scope" value="Eukaryota"/>
</dbReference>
<dbReference type="HOGENOM" id="CLU_015166_12_1_1"/>
<dbReference type="InParanoid" id="P31167"/>
<dbReference type="OMA" id="MYQRHAT"/>
<dbReference type="OrthoDB" id="270584at2759"/>
<dbReference type="PhylomeDB" id="P31167"/>
<dbReference type="CD-CODE" id="4299E36E">
    <property type="entry name" value="Nucleolus"/>
</dbReference>
<dbReference type="PRO" id="PR:P31167"/>
<dbReference type="Proteomes" id="UP000006548">
    <property type="component" value="Chromosome 3"/>
</dbReference>
<dbReference type="ExpressionAtlas" id="P31167">
    <property type="expression patterns" value="baseline and differential"/>
</dbReference>
<dbReference type="GO" id="GO:0009507">
    <property type="term" value="C:chloroplast"/>
    <property type="evidence" value="ECO:0007005"/>
    <property type="project" value="TAIR"/>
</dbReference>
<dbReference type="GO" id="GO:0009941">
    <property type="term" value="C:chloroplast envelope"/>
    <property type="evidence" value="ECO:0007005"/>
    <property type="project" value="TAIR"/>
</dbReference>
<dbReference type="GO" id="GO:0005829">
    <property type="term" value="C:cytosol"/>
    <property type="evidence" value="ECO:0007005"/>
    <property type="project" value="TAIR"/>
</dbReference>
<dbReference type="GO" id="GO:0005740">
    <property type="term" value="C:mitochondrial envelope"/>
    <property type="evidence" value="ECO:0000304"/>
    <property type="project" value="TAIR"/>
</dbReference>
<dbReference type="GO" id="GO:0005743">
    <property type="term" value="C:mitochondrial inner membrane"/>
    <property type="evidence" value="ECO:0007669"/>
    <property type="project" value="UniProtKB-SubCell"/>
</dbReference>
<dbReference type="GO" id="GO:0005739">
    <property type="term" value="C:mitochondrion"/>
    <property type="evidence" value="ECO:0007005"/>
    <property type="project" value="TAIR"/>
</dbReference>
<dbReference type="GO" id="GO:0005730">
    <property type="term" value="C:nucleolus"/>
    <property type="evidence" value="ECO:0007005"/>
    <property type="project" value="TAIR"/>
</dbReference>
<dbReference type="GO" id="GO:0009505">
    <property type="term" value="C:plant-type cell wall"/>
    <property type="evidence" value="ECO:0007005"/>
    <property type="project" value="TAIR"/>
</dbReference>
<dbReference type="GO" id="GO:0000325">
    <property type="term" value="C:plant-type vacuole"/>
    <property type="evidence" value="ECO:0007005"/>
    <property type="project" value="TAIR"/>
</dbReference>
<dbReference type="GO" id="GO:0005886">
    <property type="term" value="C:plasma membrane"/>
    <property type="evidence" value="ECO:0007005"/>
    <property type="project" value="TAIR"/>
</dbReference>
<dbReference type="GO" id="GO:0005773">
    <property type="term" value="C:vacuole"/>
    <property type="evidence" value="ECO:0007005"/>
    <property type="project" value="TAIR"/>
</dbReference>
<dbReference type="GO" id="GO:0005471">
    <property type="term" value="F:ATP:ADP antiporter activity"/>
    <property type="evidence" value="ECO:0000314"/>
    <property type="project" value="TAIR"/>
</dbReference>
<dbReference type="GO" id="GO:0005507">
    <property type="term" value="F:copper ion binding"/>
    <property type="evidence" value="ECO:0007005"/>
    <property type="project" value="TAIR"/>
</dbReference>
<dbReference type="GO" id="GO:0003729">
    <property type="term" value="F:mRNA binding"/>
    <property type="evidence" value="ECO:0000314"/>
    <property type="project" value="TAIR"/>
</dbReference>
<dbReference type="GO" id="GO:0140021">
    <property type="term" value="P:mitochondrial ADP transmembrane transport"/>
    <property type="evidence" value="ECO:0007669"/>
    <property type="project" value="InterPro"/>
</dbReference>
<dbReference type="GO" id="GO:1990544">
    <property type="term" value="P:mitochondrial ATP transmembrane transport"/>
    <property type="evidence" value="ECO:0007669"/>
    <property type="project" value="InterPro"/>
</dbReference>
<dbReference type="GO" id="GO:0015865">
    <property type="term" value="P:purine nucleotide transport"/>
    <property type="evidence" value="ECO:0000314"/>
    <property type="project" value="TAIR"/>
</dbReference>
<dbReference type="FunFam" id="1.50.40.10:FF:000001">
    <property type="entry name" value="ADP,ATP carrier protein, mitochondrial"/>
    <property type="match status" value="1"/>
</dbReference>
<dbReference type="Gene3D" id="1.50.40.10">
    <property type="entry name" value="Mitochondrial carrier domain"/>
    <property type="match status" value="1"/>
</dbReference>
<dbReference type="InterPro" id="IPR002113">
    <property type="entry name" value="ADT_euk_type"/>
</dbReference>
<dbReference type="InterPro" id="IPR002067">
    <property type="entry name" value="Mit_carrier"/>
</dbReference>
<dbReference type="InterPro" id="IPR018108">
    <property type="entry name" value="Mitochondrial_sb/sol_carrier"/>
</dbReference>
<dbReference type="InterPro" id="IPR023395">
    <property type="entry name" value="Mt_carrier_dom_sf"/>
</dbReference>
<dbReference type="PANTHER" id="PTHR45635:SF41">
    <property type="entry name" value="ADP,ATP CARRIER PROTEIN 1, MITOCHONDRIAL"/>
    <property type="match status" value="1"/>
</dbReference>
<dbReference type="PANTHER" id="PTHR45635">
    <property type="entry name" value="ADP,ATP CARRIER PROTEIN 1-RELATED-RELATED"/>
    <property type="match status" value="1"/>
</dbReference>
<dbReference type="Pfam" id="PF00153">
    <property type="entry name" value="Mito_carr"/>
    <property type="match status" value="3"/>
</dbReference>
<dbReference type="PRINTS" id="PR00927">
    <property type="entry name" value="ADPTRNSLCASE"/>
</dbReference>
<dbReference type="PRINTS" id="PR00926">
    <property type="entry name" value="MITOCARRIER"/>
</dbReference>
<dbReference type="SUPFAM" id="SSF103506">
    <property type="entry name" value="Mitochondrial carrier"/>
    <property type="match status" value="1"/>
</dbReference>
<dbReference type="PROSITE" id="PS50920">
    <property type="entry name" value="SOLCAR"/>
    <property type="match status" value="3"/>
</dbReference>
<gene>
    <name type="primary">AAC1</name>
    <name type="synonym">ANT1</name>
    <name type="ordered locus">At3g08580</name>
    <name type="ORF">F17O14.5</name>
</gene>
<sequence length="381" mass="41476">MVDQVQHPTIAQKAAGQFMRSSVSKDVQVGYQRPSMYQRHATYGNYSNAAFQFPPTSRMLATTASPVFVQTPGEKGFTNFALDFLMGGVSAAVSKTAAAPIERVKLLIQNQDEMIKAGRLSEPYKGIGDCFGRTIKDEGFGSLWRGNTANVIRYFPTQALNFAFKDYFKRLFNFKKDRDGYWKWFAGNLASGGAAGASSLLFVYSLDYARTRLANDAKAAKKGGGGRQFDGLVDVYRKTLKTDGIAGLYRGFNISCVGIIVYRGLYFGLYDSVKPVLLTGDLQDSFFASFALGWVITNGAGLASYPIDTVRRRMMMTSGEAVKYKSSLDAFKQILKNEGAKSLFKGAGANILRAVAGAGVLSGYDKLQLIVFGKKYGSGGA</sequence>
<name>ADT1_ARATH</name>
<reference key="1">
    <citation type="journal article" date="2000" name="Nature">
        <title>Sequence and analysis of chromosome 3 of the plant Arabidopsis thaliana.</title>
        <authorList>
            <person name="Salanoubat M."/>
            <person name="Lemcke K."/>
            <person name="Rieger M."/>
            <person name="Ansorge W."/>
            <person name="Unseld M."/>
            <person name="Fartmann B."/>
            <person name="Valle G."/>
            <person name="Bloecker H."/>
            <person name="Perez-Alonso M."/>
            <person name="Obermaier B."/>
            <person name="Delseny M."/>
            <person name="Boutry M."/>
            <person name="Grivell L.A."/>
            <person name="Mache R."/>
            <person name="Puigdomenech P."/>
            <person name="De Simone V."/>
            <person name="Choisne N."/>
            <person name="Artiguenave F."/>
            <person name="Robert C."/>
            <person name="Brottier P."/>
            <person name="Wincker P."/>
            <person name="Cattolico L."/>
            <person name="Weissenbach J."/>
            <person name="Saurin W."/>
            <person name="Quetier F."/>
            <person name="Schaefer M."/>
            <person name="Mueller-Auer S."/>
            <person name="Gabel C."/>
            <person name="Fuchs M."/>
            <person name="Benes V."/>
            <person name="Wurmbach E."/>
            <person name="Drzonek H."/>
            <person name="Erfle H."/>
            <person name="Jordan N."/>
            <person name="Bangert S."/>
            <person name="Wiedelmann R."/>
            <person name="Kranz H."/>
            <person name="Voss H."/>
            <person name="Holland R."/>
            <person name="Brandt P."/>
            <person name="Nyakatura G."/>
            <person name="Vezzi A."/>
            <person name="D'Angelo M."/>
            <person name="Pallavicini A."/>
            <person name="Toppo S."/>
            <person name="Simionati B."/>
            <person name="Conrad A."/>
            <person name="Hornischer K."/>
            <person name="Kauer G."/>
            <person name="Loehnert T.-H."/>
            <person name="Nordsiek G."/>
            <person name="Reichelt J."/>
            <person name="Scharfe M."/>
            <person name="Schoen O."/>
            <person name="Bargues M."/>
            <person name="Terol J."/>
            <person name="Climent J."/>
            <person name="Navarro P."/>
            <person name="Collado C."/>
            <person name="Perez-Perez A."/>
            <person name="Ottenwaelder B."/>
            <person name="Duchemin D."/>
            <person name="Cooke R."/>
            <person name="Laudie M."/>
            <person name="Berger-Llauro C."/>
            <person name="Purnelle B."/>
            <person name="Masuy D."/>
            <person name="de Haan M."/>
            <person name="Maarse A.C."/>
            <person name="Alcaraz J.-P."/>
            <person name="Cottet A."/>
            <person name="Casacuberta E."/>
            <person name="Monfort A."/>
            <person name="Argiriou A."/>
            <person name="Flores M."/>
            <person name="Liguori R."/>
            <person name="Vitale D."/>
            <person name="Mannhaupt G."/>
            <person name="Haase D."/>
            <person name="Schoof H."/>
            <person name="Rudd S."/>
            <person name="Zaccaria P."/>
            <person name="Mewes H.-W."/>
            <person name="Mayer K.F.X."/>
            <person name="Kaul S."/>
            <person name="Town C.D."/>
            <person name="Koo H.L."/>
            <person name="Tallon L.J."/>
            <person name="Jenkins J."/>
            <person name="Rooney T."/>
            <person name="Rizzo M."/>
            <person name="Walts A."/>
            <person name="Utterback T."/>
            <person name="Fujii C.Y."/>
            <person name="Shea T.P."/>
            <person name="Creasy T.H."/>
            <person name="Haas B."/>
            <person name="Maiti R."/>
            <person name="Wu D."/>
            <person name="Peterson J."/>
            <person name="Van Aken S."/>
            <person name="Pai G."/>
            <person name="Militscher J."/>
            <person name="Sellers P."/>
            <person name="Gill J.E."/>
            <person name="Feldblyum T.V."/>
            <person name="Preuss D."/>
            <person name="Lin X."/>
            <person name="Nierman W.C."/>
            <person name="Salzberg S.L."/>
            <person name="White O."/>
            <person name="Venter J.C."/>
            <person name="Fraser C.M."/>
            <person name="Kaneko T."/>
            <person name="Nakamura Y."/>
            <person name="Sato S."/>
            <person name="Kato T."/>
            <person name="Asamizu E."/>
            <person name="Sasamoto S."/>
            <person name="Kimura T."/>
            <person name="Idesawa K."/>
            <person name="Kawashima K."/>
            <person name="Kishida Y."/>
            <person name="Kiyokawa C."/>
            <person name="Kohara M."/>
            <person name="Matsumoto M."/>
            <person name="Matsuno A."/>
            <person name="Muraki A."/>
            <person name="Nakayama S."/>
            <person name="Nakazaki N."/>
            <person name="Shinpo S."/>
            <person name="Takeuchi C."/>
            <person name="Wada T."/>
            <person name="Watanabe A."/>
            <person name="Yamada M."/>
            <person name="Yasuda M."/>
            <person name="Tabata S."/>
        </authorList>
    </citation>
    <scope>NUCLEOTIDE SEQUENCE [LARGE SCALE GENOMIC DNA]</scope>
    <source>
        <strain>cv. Columbia</strain>
    </source>
</reference>
<reference key="2">
    <citation type="journal article" date="2017" name="Plant J.">
        <title>Araport11: a complete reannotation of the Arabidopsis thaliana reference genome.</title>
        <authorList>
            <person name="Cheng C.Y."/>
            <person name="Krishnakumar V."/>
            <person name="Chan A.P."/>
            <person name="Thibaud-Nissen F."/>
            <person name="Schobel S."/>
            <person name="Town C.D."/>
        </authorList>
    </citation>
    <scope>GENOME REANNOTATION</scope>
    <source>
        <strain>cv. Columbia</strain>
    </source>
</reference>
<reference key="3">
    <citation type="journal article" date="2003" name="Science">
        <title>Empirical analysis of transcriptional activity in the Arabidopsis genome.</title>
        <authorList>
            <person name="Yamada K."/>
            <person name="Lim J."/>
            <person name="Dale J.M."/>
            <person name="Chen H."/>
            <person name="Shinn P."/>
            <person name="Palm C.J."/>
            <person name="Southwick A.M."/>
            <person name="Wu H.C."/>
            <person name="Kim C.J."/>
            <person name="Nguyen M."/>
            <person name="Pham P.K."/>
            <person name="Cheuk R.F."/>
            <person name="Karlin-Newmann G."/>
            <person name="Liu S.X."/>
            <person name="Lam B."/>
            <person name="Sakano H."/>
            <person name="Wu T."/>
            <person name="Yu G."/>
            <person name="Miranda M."/>
            <person name="Quach H.L."/>
            <person name="Tripp M."/>
            <person name="Chang C.H."/>
            <person name="Lee J.M."/>
            <person name="Toriumi M.J."/>
            <person name="Chan M.M."/>
            <person name="Tang C.C."/>
            <person name="Onodera C.S."/>
            <person name="Deng J.M."/>
            <person name="Akiyama K."/>
            <person name="Ansari Y."/>
            <person name="Arakawa T."/>
            <person name="Banh J."/>
            <person name="Banno F."/>
            <person name="Bowser L."/>
            <person name="Brooks S.Y."/>
            <person name="Carninci P."/>
            <person name="Chao Q."/>
            <person name="Choy N."/>
            <person name="Enju A."/>
            <person name="Goldsmith A.D."/>
            <person name="Gurjal M."/>
            <person name="Hansen N.F."/>
            <person name="Hayashizaki Y."/>
            <person name="Johnson-Hopson C."/>
            <person name="Hsuan V.W."/>
            <person name="Iida K."/>
            <person name="Karnes M."/>
            <person name="Khan S."/>
            <person name="Koesema E."/>
            <person name="Ishida J."/>
            <person name="Jiang P.X."/>
            <person name="Jones T."/>
            <person name="Kawai J."/>
            <person name="Kamiya A."/>
            <person name="Meyers C."/>
            <person name="Nakajima M."/>
            <person name="Narusaka M."/>
            <person name="Seki M."/>
            <person name="Sakurai T."/>
            <person name="Satou M."/>
            <person name="Tamse R."/>
            <person name="Vaysberg M."/>
            <person name="Wallender E.K."/>
            <person name="Wong C."/>
            <person name="Yamamura Y."/>
            <person name="Yuan S."/>
            <person name="Shinozaki K."/>
            <person name="Davis R.W."/>
            <person name="Theologis A."/>
            <person name="Ecker J.R."/>
        </authorList>
    </citation>
    <scope>NUCLEOTIDE SEQUENCE [LARGE SCALE MRNA]</scope>
    <source>
        <strain>cv. Columbia</strain>
    </source>
</reference>
<reference key="4">
    <citation type="journal article" date="1992" name="Plant Physiol.">
        <title>Complementary DNA sequence of an adenylate translocator from Arabidopsis thaliana.</title>
        <authorList>
            <person name="Saint-Guily A."/>
            <person name="Lim P.Y."/>
            <person name="Chevalier C."/>
            <person name="Yamaguchi J."/>
            <person name="Akazawa T."/>
        </authorList>
    </citation>
    <scope>NUCLEOTIDE SEQUENCE [MRNA] OF 3-381</scope>
    <source>
        <strain>cv. Columbia</strain>
    </source>
</reference>
<reference key="5">
    <citation type="journal article" date="1996" name="Plant J.">
        <title>Further progress towards a catalogue of all Arabidopsis genes: analysis of a set of 5000 non-redundant ESTs.</title>
        <authorList>
            <person name="Cooke R."/>
            <person name="Raynal M."/>
            <person name="Laudie M."/>
            <person name="Grellet F."/>
            <person name="Delseny M."/>
            <person name="Morris P.-C."/>
            <person name="Guerrier D."/>
            <person name="Giraudat J."/>
            <person name="Quigley F."/>
            <person name="Clabault G."/>
            <person name="Li Y.-F."/>
            <person name="Mache R."/>
            <person name="Krivitzky M."/>
            <person name="Gy I.J.-J."/>
            <person name="Kreis M."/>
            <person name="Lecharny A."/>
            <person name="Parmentier Y."/>
            <person name="Marbach J."/>
            <person name="Fleck J."/>
            <person name="Clement B."/>
            <person name="Philipps G."/>
            <person name="Herve C."/>
            <person name="Bardet C."/>
            <person name="Tremousaygue D."/>
            <person name="Lescure B."/>
            <person name="Lacomme C."/>
            <person name="Roby D."/>
            <person name="Jourjon M.-F."/>
            <person name="Chabrier P."/>
            <person name="Charpenteau J.-L."/>
            <person name="Desprez T."/>
            <person name="Amselem J."/>
            <person name="Chiapello H."/>
            <person name="Hoefte H."/>
        </authorList>
    </citation>
    <scope>NUCLEOTIDE SEQUENCE [LARGE SCALE MRNA] OF 83-190</scope>
    <source>
        <strain>cv. Columbia</strain>
    </source>
</reference>
<reference key="6">
    <citation type="journal article" date="2004" name="Plant Cell">
        <title>Experimental analysis of the Arabidopsis mitochondrial proteome highlights signaling and regulatory components, provides assessment of targeting prediction programs, and indicates plant-specific mitochondrial proteins.</title>
        <authorList>
            <person name="Heazlewood J.L."/>
            <person name="Tonti-Filippini J.S."/>
            <person name="Gout A.M."/>
            <person name="Day D.A."/>
            <person name="Whelan J."/>
            <person name="Millar A.H."/>
        </authorList>
    </citation>
    <scope>IDENTIFICATION BY MASS SPECTROMETRY</scope>
    <scope>SUBCELLULAR LOCATION [LARGE SCALE ANALYSIS]</scope>
    <source>
        <strain>cv. Landsberg erecta</strain>
    </source>
</reference>
<reference key="7">
    <citation type="journal article" date="2004" name="Trends Plant Sci.">
        <title>The growing family of mitochondrial carriers in Arabidopsis.</title>
        <authorList>
            <person name="Picault N."/>
            <person name="Hodges M."/>
            <person name="Palmieri L."/>
            <person name="Palmieri F."/>
        </authorList>
    </citation>
    <scope>GENE FAMILY</scope>
</reference>
<reference key="8">
    <citation type="journal article" date="2009" name="J. Proteomics">
        <title>Phosphoproteomic analysis of nuclei-enriched fractions from Arabidopsis thaliana.</title>
        <authorList>
            <person name="Jones A.M.E."/>
            <person name="MacLean D."/>
            <person name="Studholme D.J."/>
            <person name="Serna-Sanz A."/>
            <person name="Andreasson E."/>
            <person name="Rathjen J.P."/>
            <person name="Peck S.C."/>
        </authorList>
    </citation>
    <scope>IDENTIFICATION BY MASS SPECTROMETRY [LARGE SCALE ANALYSIS]</scope>
    <source>
        <strain>cv. Columbia</strain>
    </source>
</reference>
<keyword id="KW-0050">Antiport</keyword>
<keyword id="KW-0472">Membrane</keyword>
<keyword id="KW-0496">Mitochondrion</keyword>
<keyword id="KW-0999">Mitochondrion inner membrane</keyword>
<keyword id="KW-1185">Reference proteome</keyword>
<keyword id="KW-0677">Repeat</keyword>
<keyword id="KW-0809">Transit peptide</keyword>
<keyword id="KW-0812">Transmembrane</keyword>
<keyword id="KW-1133">Transmembrane helix</keyword>
<keyword id="KW-0813">Transport</keyword>
<comment type="function">
    <text evidence="1 5">ADP:ATP antiporter that mediates import of ADP into the mitochondrial matrix for ATP synthesis, and export of ATP out to fuel the cell (By similarity). Cycles between the cytoplasmic-open state (c-state) and the matrix-open state (m-state): operates by the alternating access mechanism with a single substrate-binding site intermittently exposed to either the cytosolic (c-state) or matrix (m-state) side of the inner mitochondrial membrane (By similarity).</text>
</comment>
<comment type="catalytic activity">
    <reaction evidence="5">
        <text>ADP(in) + ATP(out) = ADP(out) + ATP(in)</text>
        <dbReference type="Rhea" id="RHEA:34999"/>
        <dbReference type="ChEBI" id="CHEBI:30616"/>
        <dbReference type="ChEBI" id="CHEBI:456216"/>
    </reaction>
    <physiologicalReaction direction="left-to-right" evidence="5">
        <dbReference type="Rhea" id="RHEA:35000"/>
    </physiologicalReaction>
</comment>
<comment type="activity regulation">
    <text evidence="1">The matrix-open state (m-state) is inhibited by the membrane-permeable bongkrekic acid (BKA). The cytoplasmic-open state (c-state) is inhibited by the membrane-impermeable toxic inhibitor carboxyatractyloside (CATR).</text>
</comment>
<comment type="subunit">
    <text evidence="1 2">Monomer.</text>
</comment>
<comment type="subcellular location">
    <subcellularLocation>
        <location evidence="7">Mitochondrion inner membrane</location>
        <topology evidence="6">Multi-pass membrane protein</topology>
    </subcellularLocation>
</comment>
<comment type="domain">
    <text evidence="4">The transmembrane helices are not perpendicular to the plane of the membrane, but cross the membrane at an angle. At least 2 of the odd-numbered transmembrane helices exhibit a sharp kink, due to the presence of a conserved proline residue.</text>
</comment>
<comment type="similarity">
    <text evidence="8">Belongs to the mitochondrial carrier (TC 2.A.29) family.</text>
</comment>
<feature type="transit peptide" description="Mitochondrion" evidence="6">
    <location>
        <begin position="1"/>
        <end position="70"/>
    </location>
</feature>
<feature type="chain" id="PRO_0000019245" description="ADP,ATP carrier protein 1, mitochondrial">
    <location>
        <begin position="71"/>
        <end position="381"/>
    </location>
</feature>
<feature type="transmembrane region" description="Helical; Name=1" evidence="4">
    <location>
        <begin position="80"/>
        <end position="107"/>
    </location>
</feature>
<feature type="transmembrane region" description="Helical; Name=2" evidence="4">
    <location>
        <begin position="148"/>
        <end position="172"/>
    </location>
</feature>
<feature type="transmembrane region" description="Helical; Name=3" evidence="4">
    <location>
        <begin position="181"/>
        <end position="201"/>
    </location>
</feature>
<feature type="transmembrane region" description="Helical; Name=4" evidence="4">
    <location>
        <begin position="252"/>
        <end position="273"/>
    </location>
</feature>
<feature type="transmembrane region" description="Helical; Name=5" evidence="4">
    <location>
        <begin position="287"/>
        <end position="307"/>
    </location>
</feature>
<feature type="transmembrane region" description="Helical; Name=6" evidence="4">
    <location>
        <begin position="347"/>
        <end position="367"/>
    </location>
</feature>
<feature type="repeat" description="Solcar 1">
    <location>
        <begin position="78"/>
        <end position="171"/>
    </location>
</feature>
<feature type="repeat" description="Solcar 2">
    <location>
        <begin position="183"/>
        <end position="276"/>
    </location>
</feature>
<feature type="repeat" description="Solcar 3">
    <location>
        <begin position="284"/>
        <end position="370"/>
    </location>
</feature>
<feature type="region of interest" description="Important for transport activity" evidence="3">
    <location>
        <begin position="311"/>
        <end position="316"/>
    </location>
</feature>
<feature type="short sequence motif" description="Nucleotide carrier signature motif" evidence="2">
    <location>
        <begin position="311"/>
        <end position="316"/>
    </location>
</feature>
<feature type="binding site" evidence="2">
    <location>
        <position position="153"/>
    </location>
    <ligand>
        <name>ADP</name>
        <dbReference type="ChEBI" id="CHEBI:456216"/>
    </ligand>
</feature>
<feature type="binding site" evidence="2">
    <location>
        <position position="165"/>
    </location>
    <ligand>
        <name>ADP</name>
        <dbReference type="ChEBI" id="CHEBI:456216"/>
    </ligand>
</feature>
<feature type="binding site" evidence="2">
    <location>
        <position position="311"/>
    </location>
    <ligand>
        <name>ADP</name>
        <dbReference type="ChEBI" id="CHEBI:456216"/>
    </ligand>
</feature>
<feature type="sequence conflict" description="In Ref. 4; CAA46518." evidence="8" ref="4">
    <original>D</original>
    <variation>H</variation>
    <location>
        <position position="3"/>
    </location>
</feature>
<feature type="sequence conflict" description="In Ref. 4; CAA46518." evidence="8" ref="4">
    <original>G</original>
    <variation>N</variation>
    <location>
        <position position="319"/>
    </location>
</feature>
<feature type="sequence conflict" description="In Ref. 4; CAA46518." evidence="8" ref="4">
    <original>Q</original>
    <variation>T</variation>
    <location>
        <position position="368"/>
    </location>
</feature>
<evidence type="ECO:0000250" key="1">
    <source>
        <dbReference type="UniProtKB" id="G2QNH0"/>
    </source>
</evidence>
<evidence type="ECO:0000250" key="2">
    <source>
        <dbReference type="UniProtKB" id="P02722"/>
    </source>
</evidence>
<evidence type="ECO:0000250" key="3">
    <source>
        <dbReference type="UniProtKB" id="P12235"/>
    </source>
</evidence>
<evidence type="ECO:0000250" key="4">
    <source>
        <dbReference type="UniProtKB" id="P18239"/>
    </source>
</evidence>
<evidence type="ECO:0000250" key="5">
    <source>
        <dbReference type="UniProtKB" id="P48962"/>
    </source>
</evidence>
<evidence type="ECO:0000255" key="6"/>
<evidence type="ECO:0000269" key="7">
    <source>
    </source>
</evidence>
<evidence type="ECO:0000305" key="8"/>
<accession>P31167</accession>
<accession>Q9M9K2</accession>
<organism>
    <name type="scientific">Arabidopsis thaliana</name>
    <name type="common">Mouse-ear cress</name>
    <dbReference type="NCBI Taxonomy" id="3702"/>
    <lineage>
        <taxon>Eukaryota</taxon>
        <taxon>Viridiplantae</taxon>
        <taxon>Streptophyta</taxon>
        <taxon>Embryophyta</taxon>
        <taxon>Tracheophyta</taxon>
        <taxon>Spermatophyta</taxon>
        <taxon>Magnoliopsida</taxon>
        <taxon>eudicotyledons</taxon>
        <taxon>Gunneridae</taxon>
        <taxon>Pentapetalae</taxon>
        <taxon>rosids</taxon>
        <taxon>malvids</taxon>
        <taxon>Brassicales</taxon>
        <taxon>Brassicaceae</taxon>
        <taxon>Camelineae</taxon>
        <taxon>Arabidopsis</taxon>
    </lineage>
</organism>
<proteinExistence type="evidence at protein level"/>